<feature type="chain" id="PRO_0000447123" description="Staphyloferrin B transporter">
    <location>
        <begin position="1"/>
        <end position="418"/>
    </location>
</feature>
<feature type="transmembrane region" description="Helical" evidence="1">
    <location>
        <begin position="19"/>
        <end position="39"/>
    </location>
</feature>
<feature type="transmembrane region" description="Helical" evidence="1">
    <location>
        <begin position="49"/>
        <end position="69"/>
    </location>
</feature>
<feature type="transmembrane region" description="Helical" evidence="1">
    <location>
        <begin position="88"/>
        <end position="108"/>
    </location>
</feature>
<feature type="transmembrane region" description="Helical" evidence="1">
    <location>
        <begin position="163"/>
        <end position="183"/>
    </location>
</feature>
<feature type="transmembrane region" description="Helical" evidence="1">
    <location>
        <begin position="222"/>
        <end position="242"/>
    </location>
</feature>
<feature type="transmembrane region" description="Helical" evidence="1">
    <location>
        <begin position="257"/>
        <end position="277"/>
    </location>
</feature>
<feature type="transmembrane region" description="Helical" evidence="1">
    <location>
        <begin position="287"/>
        <end position="307"/>
    </location>
</feature>
<feature type="transmembrane region" description="Helical" evidence="1">
    <location>
        <begin position="317"/>
        <end position="337"/>
    </location>
</feature>
<feature type="transmembrane region" description="Helical" evidence="1">
    <location>
        <begin position="353"/>
        <end position="373"/>
    </location>
</feature>
<feature type="transmembrane region" description="Helical" evidence="1">
    <location>
        <begin position="377"/>
        <end position="397"/>
    </location>
</feature>
<evidence type="ECO:0000255" key="1"/>
<evidence type="ECO:0000269" key="2">
    <source>
    </source>
</evidence>
<evidence type="ECO:0000269" key="3">
    <source>
    </source>
</evidence>
<evidence type="ECO:0000303" key="4">
    <source>
    </source>
</evidence>
<evidence type="ECO:0000305" key="5"/>
<evidence type="ECO:0000312" key="6">
    <source>
        <dbReference type="EMBL" id="ABD29261.1"/>
    </source>
</evidence>
<proteinExistence type="evidence at transcript level"/>
<dbReference type="EMBL" id="AY251022">
    <property type="protein sequence ID" value="AAP82066.1"/>
    <property type="molecule type" value="Genomic_DNA"/>
</dbReference>
<dbReference type="EMBL" id="CP000253">
    <property type="protein sequence ID" value="ABD29261.1"/>
    <property type="molecule type" value="Genomic_DNA"/>
</dbReference>
<dbReference type="RefSeq" id="WP_000610051.1">
    <property type="nucleotide sequence ID" value="NZ_LS483365.1"/>
</dbReference>
<dbReference type="RefSeq" id="YP_498678.1">
    <property type="nucleotide sequence ID" value="NC_007795.1"/>
</dbReference>
<dbReference type="SMR" id="Q2G1N0"/>
<dbReference type="STRING" id="93061.SAOUHSC_00078"/>
<dbReference type="TCDB" id="2.A.1.2.99">
    <property type="family name" value="the major facilitator superfamily (mfs)"/>
</dbReference>
<dbReference type="PaxDb" id="1280-SAXN108_0105"/>
<dbReference type="GeneID" id="3919456"/>
<dbReference type="KEGG" id="sao:SAOUHSC_00078"/>
<dbReference type="PATRIC" id="fig|1280.10341.peg.115"/>
<dbReference type="eggNOG" id="COG2814">
    <property type="taxonomic scope" value="Bacteria"/>
</dbReference>
<dbReference type="HOGENOM" id="CLU_001265_57_5_9"/>
<dbReference type="OrthoDB" id="65739at2"/>
<dbReference type="Proteomes" id="UP000008816">
    <property type="component" value="Chromosome"/>
</dbReference>
<dbReference type="GO" id="GO:0005886">
    <property type="term" value="C:plasma membrane"/>
    <property type="evidence" value="ECO:0007669"/>
    <property type="project" value="UniProtKB-SubCell"/>
</dbReference>
<dbReference type="GO" id="GO:0022857">
    <property type="term" value="F:transmembrane transporter activity"/>
    <property type="evidence" value="ECO:0007669"/>
    <property type="project" value="InterPro"/>
</dbReference>
<dbReference type="Gene3D" id="1.20.1250.20">
    <property type="entry name" value="MFS general substrate transporter like domains"/>
    <property type="match status" value="2"/>
</dbReference>
<dbReference type="InterPro" id="IPR011701">
    <property type="entry name" value="MFS"/>
</dbReference>
<dbReference type="InterPro" id="IPR020846">
    <property type="entry name" value="MFS_dom"/>
</dbReference>
<dbReference type="InterPro" id="IPR050497">
    <property type="entry name" value="MFS_MdtG_subfamily"/>
</dbReference>
<dbReference type="InterPro" id="IPR005828">
    <property type="entry name" value="MFS_sugar_transport-like"/>
</dbReference>
<dbReference type="InterPro" id="IPR036259">
    <property type="entry name" value="MFS_trans_sf"/>
</dbReference>
<dbReference type="InterPro" id="IPR001958">
    <property type="entry name" value="Tet-R_TetA/multi-R_MdtG-like"/>
</dbReference>
<dbReference type="PANTHER" id="PTHR43414">
    <property type="entry name" value="MULTIDRUG RESISTANCE PROTEIN MDTG"/>
    <property type="match status" value="1"/>
</dbReference>
<dbReference type="PANTHER" id="PTHR43414:SF6">
    <property type="entry name" value="MULTIDRUG RESISTANCE PROTEIN MDTG"/>
    <property type="match status" value="1"/>
</dbReference>
<dbReference type="Pfam" id="PF07690">
    <property type="entry name" value="MFS_1"/>
    <property type="match status" value="1"/>
</dbReference>
<dbReference type="Pfam" id="PF00083">
    <property type="entry name" value="Sugar_tr"/>
    <property type="match status" value="1"/>
</dbReference>
<dbReference type="PRINTS" id="PR01035">
    <property type="entry name" value="TCRTETA"/>
</dbReference>
<dbReference type="SUPFAM" id="SSF103473">
    <property type="entry name" value="MFS general substrate transporter"/>
    <property type="match status" value="1"/>
</dbReference>
<dbReference type="PROSITE" id="PS50850">
    <property type="entry name" value="MFS"/>
    <property type="match status" value="1"/>
</dbReference>
<reference key="1">
    <citation type="journal article" date="2004" name="Infect. Immun.">
        <title>Role of siderophore biosynthesis in virulence of Staphylococcus aureus: identification and characterization of genes involved in production of a siderophore.</title>
        <authorList>
            <person name="Dale S.E."/>
            <person name="Doherty-Kirby A."/>
            <person name="Lajoie G."/>
            <person name="Heinrichs D.E."/>
        </authorList>
    </citation>
    <scope>NUCLEOTIDE SEQUENCE [GENOMIC DNA]</scope>
    <scope>INDUCTION</scope>
</reference>
<reference key="2">
    <citation type="book" date="2006" name="Gram positive pathogens, 2nd edition">
        <title>The Staphylococcus aureus NCTC 8325 genome.</title>
        <editorList>
            <person name="Fischetti V."/>
            <person name="Novick R."/>
            <person name="Ferretti J."/>
            <person name="Portnoy D."/>
            <person name="Rood J."/>
        </editorList>
        <authorList>
            <person name="Gillaspy A.F."/>
            <person name="Worrell V."/>
            <person name="Orvis J."/>
            <person name="Roe B.A."/>
            <person name="Dyer D.W."/>
            <person name="Iandolo J.J."/>
        </authorList>
    </citation>
    <scope>NUCLEOTIDE SEQUENCE [LARGE SCALE GENOMIC DNA]</scope>
    <source>
        <strain>NCTC 8325 / PS 47</strain>
    </source>
</reference>
<reference key="3">
    <citation type="journal article" date="2015" name="FEBS Lett.">
        <title>Involvement of major facilitator superfamily proteins SfaA and SbnD in staphyloferrin secretion in Staphylococcus aureus.</title>
        <authorList>
            <person name="Hannauer M."/>
            <person name="Sheldon J.R."/>
            <person name="Heinrichs D.E."/>
        </authorList>
    </citation>
    <scope>FUNCTION</scope>
    <scope>DISRUPTION PHENOTYPE</scope>
</reference>
<name>SBND_STAA8</name>
<sequence>MINQSIWRSNFRILWLSQFIAIAGLTVLVPLLPIYMASLQNLSVVEIQLWSGIAIAAPAVTTMIASPIWGKLGDKISRKWMVLRALLGLAVCLFLMALCTTPLQFVLVRLLQGLFGGVVDASSAFASAEAPAEDRGKVLGRLQSSVSAGSLVGPLIGGVTASILGFSALLMSIAVITFIVCIFGALKLIETTHMPKSQTPNINKGIRRSFQCLLCTQQTCRFIIVGVLANFAMYGMLTALSPLASSVNHTAIDDRSVIGFLQSAFWTASILSAPLWGRFNDKSYVKSVYIFATIACGCSAILQGLATNIEFLMAARILQGLTYSALIQSVMFVVVNACHQQLKGTFVGTTNSMLVVGQIIGSLSGAAITSYTTPATTFIVMGVVFAVSSLFLICSTITNQINDHTLMKLWELKQKSAK</sequence>
<comment type="function">
    <text evidence="3">Involved in staphyloferrin B secretion.</text>
</comment>
<comment type="subcellular location">
    <subcellularLocation>
        <location evidence="5">Cell membrane</location>
        <topology evidence="1">Multi-pass membrane protein</topology>
    </subcellularLocation>
</comment>
<comment type="induction">
    <text evidence="2">Up-regulated under iron-deficient growth conditions. Repressed by Fur under iron-rich growth conditions.</text>
</comment>
<comment type="disruption phenotype">
    <text evidence="3">Deletion of the gene impacts growth in iron-depleted media. Mutant is partially impaired for staphyloferrin B secretion.</text>
</comment>
<comment type="similarity">
    <text evidence="5">Belongs to the major facilitator superfamily.</text>
</comment>
<accession>Q2G1N0</accession>
<accession>Q6X7U4</accession>
<protein>
    <recommendedName>
        <fullName evidence="5">Staphyloferrin B transporter</fullName>
    </recommendedName>
</protein>
<gene>
    <name evidence="4" type="primary">sbnD</name>
    <name evidence="6" type="ordered locus">SAOUHSC_00078</name>
</gene>
<keyword id="KW-1003">Cell membrane</keyword>
<keyword id="KW-0472">Membrane</keyword>
<keyword id="KW-1185">Reference proteome</keyword>
<keyword id="KW-0812">Transmembrane</keyword>
<keyword id="KW-1133">Transmembrane helix</keyword>
<keyword id="KW-0813">Transport</keyword>
<organism>
    <name type="scientific">Staphylococcus aureus (strain NCTC 8325 / PS 47)</name>
    <dbReference type="NCBI Taxonomy" id="93061"/>
    <lineage>
        <taxon>Bacteria</taxon>
        <taxon>Bacillati</taxon>
        <taxon>Bacillota</taxon>
        <taxon>Bacilli</taxon>
        <taxon>Bacillales</taxon>
        <taxon>Staphylococcaceae</taxon>
        <taxon>Staphylococcus</taxon>
    </lineage>
</organism>